<keyword id="KW-0067">ATP-binding</keyword>
<keyword id="KW-0997">Cell inner membrane</keyword>
<keyword id="KW-1003">Cell membrane</keyword>
<keyword id="KW-0472">Membrane</keyword>
<keyword id="KW-0547">Nucleotide-binding</keyword>
<keyword id="KW-1185">Reference proteome</keyword>
<keyword id="KW-1278">Translocase</keyword>
<keyword id="KW-0813">Transport</keyword>
<feature type="chain" id="PRO_0000269596" description="Hemin import ATP-binding protein HmuV">
    <location>
        <begin position="1"/>
        <end position="256"/>
    </location>
</feature>
<feature type="domain" description="ABC transporter" evidence="1">
    <location>
        <begin position="2"/>
        <end position="239"/>
    </location>
</feature>
<feature type="binding site" evidence="1">
    <location>
        <begin position="34"/>
        <end position="41"/>
    </location>
    <ligand>
        <name>ATP</name>
        <dbReference type="ChEBI" id="CHEBI:30616"/>
    </ligand>
</feature>
<sequence>MIHAFAVSVIRHERTLLEQINFRLNPGELVVTLGPNGAGKSTLLKTLAGDLPPSHGHVLLDDEPISQFSLSQLSRRRAVLSQSVHLDFPFSAMEVVLMGAQRTLSGGDPFRLSQQALEEVDAGHLAQRNYQDLSGGERQRVQIARALTQLWTGVGAGPQYLMLDEPTSALDLKHQSALLKLARKLAGKGVGVFCVLHDLHLAAQYADRILLMNHGRIVAEGAPETLITTANVREVYQVDSRILPHPVTQRPMVMID</sequence>
<organism>
    <name type="scientific">Hahella chejuensis (strain KCTC 2396)</name>
    <dbReference type="NCBI Taxonomy" id="349521"/>
    <lineage>
        <taxon>Bacteria</taxon>
        <taxon>Pseudomonadati</taxon>
        <taxon>Pseudomonadota</taxon>
        <taxon>Gammaproteobacteria</taxon>
        <taxon>Oceanospirillales</taxon>
        <taxon>Hahellaceae</taxon>
        <taxon>Hahella</taxon>
    </lineage>
</organism>
<accession>Q2SB47</accession>
<protein>
    <recommendedName>
        <fullName evidence="1">Hemin import ATP-binding protein HmuV</fullName>
        <ecNumber evidence="1">7.6.2.-</ecNumber>
    </recommendedName>
</protein>
<comment type="function">
    <text evidence="1">Part of the ABC transporter complex HmuTUV involved in hemin import. Responsible for energy coupling to the transport system.</text>
</comment>
<comment type="subunit">
    <text evidence="1">The complex is composed of two ATP-binding proteins (HmuV), two transmembrane proteins (HmuU) and a solute-binding protein (HmuT).</text>
</comment>
<comment type="subcellular location">
    <subcellularLocation>
        <location evidence="1">Cell inner membrane</location>
        <topology evidence="1">Peripheral membrane protein</topology>
    </subcellularLocation>
</comment>
<comment type="similarity">
    <text evidence="1">Belongs to the ABC transporter superfamily. Heme (hemin) importer (TC 3.A.1.14.5) family.</text>
</comment>
<proteinExistence type="inferred from homology"/>
<name>HMUV_HAHCH</name>
<dbReference type="EC" id="7.6.2.-" evidence="1"/>
<dbReference type="EMBL" id="CP000155">
    <property type="protein sequence ID" value="ABC32127.1"/>
    <property type="molecule type" value="Genomic_DNA"/>
</dbReference>
<dbReference type="RefSeq" id="WP_011399191.1">
    <property type="nucleotide sequence ID" value="NC_007645.1"/>
</dbReference>
<dbReference type="SMR" id="Q2SB47"/>
<dbReference type="STRING" id="349521.HCH_05463"/>
<dbReference type="KEGG" id="hch:HCH_05463"/>
<dbReference type="eggNOG" id="COG4559">
    <property type="taxonomic scope" value="Bacteria"/>
</dbReference>
<dbReference type="HOGENOM" id="CLU_000604_1_11_6"/>
<dbReference type="OrthoDB" id="6461291at2"/>
<dbReference type="Proteomes" id="UP000000238">
    <property type="component" value="Chromosome"/>
</dbReference>
<dbReference type="GO" id="GO:0005886">
    <property type="term" value="C:plasma membrane"/>
    <property type="evidence" value="ECO:0007669"/>
    <property type="project" value="UniProtKB-SubCell"/>
</dbReference>
<dbReference type="GO" id="GO:0005524">
    <property type="term" value="F:ATP binding"/>
    <property type="evidence" value="ECO:0007669"/>
    <property type="project" value="UniProtKB-KW"/>
</dbReference>
<dbReference type="GO" id="GO:0016887">
    <property type="term" value="F:ATP hydrolysis activity"/>
    <property type="evidence" value="ECO:0007669"/>
    <property type="project" value="InterPro"/>
</dbReference>
<dbReference type="CDD" id="cd03214">
    <property type="entry name" value="ABC_Iron-Siderophores_B12_Hemin"/>
    <property type="match status" value="1"/>
</dbReference>
<dbReference type="Gene3D" id="3.40.50.300">
    <property type="entry name" value="P-loop containing nucleotide triphosphate hydrolases"/>
    <property type="match status" value="1"/>
</dbReference>
<dbReference type="InterPro" id="IPR003593">
    <property type="entry name" value="AAA+_ATPase"/>
</dbReference>
<dbReference type="InterPro" id="IPR003439">
    <property type="entry name" value="ABC_transporter-like_ATP-bd"/>
</dbReference>
<dbReference type="InterPro" id="IPR017871">
    <property type="entry name" value="ABC_transporter-like_CS"/>
</dbReference>
<dbReference type="InterPro" id="IPR027417">
    <property type="entry name" value="P-loop_NTPase"/>
</dbReference>
<dbReference type="NCBIfam" id="NF010068">
    <property type="entry name" value="PRK13548.1"/>
    <property type="match status" value="1"/>
</dbReference>
<dbReference type="PANTHER" id="PTHR42794">
    <property type="entry name" value="HEMIN IMPORT ATP-BINDING PROTEIN HMUV"/>
    <property type="match status" value="1"/>
</dbReference>
<dbReference type="PANTHER" id="PTHR42794:SF1">
    <property type="entry name" value="HEMIN IMPORT ATP-BINDING PROTEIN HMUV"/>
    <property type="match status" value="1"/>
</dbReference>
<dbReference type="Pfam" id="PF00005">
    <property type="entry name" value="ABC_tran"/>
    <property type="match status" value="1"/>
</dbReference>
<dbReference type="SMART" id="SM00382">
    <property type="entry name" value="AAA"/>
    <property type="match status" value="1"/>
</dbReference>
<dbReference type="SUPFAM" id="SSF52540">
    <property type="entry name" value="P-loop containing nucleoside triphosphate hydrolases"/>
    <property type="match status" value="1"/>
</dbReference>
<dbReference type="PROSITE" id="PS00211">
    <property type="entry name" value="ABC_TRANSPORTER_1"/>
    <property type="match status" value="1"/>
</dbReference>
<dbReference type="PROSITE" id="PS50893">
    <property type="entry name" value="ABC_TRANSPORTER_2"/>
    <property type="match status" value="1"/>
</dbReference>
<dbReference type="PROSITE" id="PS51261">
    <property type="entry name" value="HMUV"/>
    <property type="match status" value="1"/>
</dbReference>
<gene>
    <name evidence="1" type="primary">hmuV</name>
    <name type="ordered locus">HCH_05463</name>
</gene>
<evidence type="ECO:0000255" key="1">
    <source>
        <dbReference type="HAMAP-Rule" id="MF_01718"/>
    </source>
</evidence>
<reference key="1">
    <citation type="journal article" date="2005" name="Nucleic Acids Res.">
        <title>Genomic blueprint of Hahella chejuensis, a marine microbe producing an algicidal agent.</title>
        <authorList>
            <person name="Jeong H."/>
            <person name="Yim J.H."/>
            <person name="Lee C."/>
            <person name="Choi S.-H."/>
            <person name="Park Y.K."/>
            <person name="Yoon S.H."/>
            <person name="Hur C.-G."/>
            <person name="Kang H.-Y."/>
            <person name="Kim D."/>
            <person name="Lee H.H."/>
            <person name="Park K.H."/>
            <person name="Park S.-H."/>
            <person name="Park H.-S."/>
            <person name="Lee H.K."/>
            <person name="Oh T.K."/>
            <person name="Kim J.F."/>
        </authorList>
    </citation>
    <scope>NUCLEOTIDE SEQUENCE [LARGE SCALE GENOMIC DNA]</scope>
    <source>
        <strain>KCTC 2396</strain>
    </source>
</reference>